<keyword id="KW-0131">Cell cycle</keyword>
<keyword id="KW-0132">Cell division</keyword>
<keyword id="KW-0342">GTP-binding</keyword>
<keyword id="KW-0460">Magnesium</keyword>
<keyword id="KW-0479">Metal-binding</keyword>
<keyword id="KW-0547">Nucleotide-binding</keyword>
<keyword id="KW-1185">Reference proteome</keyword>
<keyword id="KW-0717">Septation</keyword>
<proteinExistence type="inferred from homology"/>
<accession>Q8TYT5</accession>
<feature type="chain" id="PRO_0000157811" description="Probable GTP-binding protein EngB">
    <location>
        <begin position="1"/>
        <end position="203"/>
    </location>
</feature>
<feature type="domain" description="EngB-type G" evidence="1">
    <location>
        <begin position="1"/>
        <end position="190"/>
    </location>
</feature>
<feature type="binding site" evidence="1">
    <location>
        <begin position="8"/>
        <end position="15"/>
    </location>
    <ligand>
        <name>GTP</name>
        <dbReference type="ChEBI" id="CHEBI:37565"/>
    </ligand>
</feature>
<feature type="binding site" evidence="1">
    <location>
        <position position="15"/>
    </location>
    <ligand>
        <name>Mg(2+)</name>
        <dbReference type="ChEBI" id="CHEBI:18420"/>
    </ligand>
</feature>
<feature type="binding site" evidence="1">
    <location>
        <begin position="35"/>
        <end position="39"/>
    </location>
    <ligand>
        <name>GTP</name>
        <dbReference type="ChEBI" id="CHEBI:37565"/>
    </ligand>
</feature>
<feature type="binding site" evidence="1">
    <location>
        <position position="37"/>
    </location>
    <ligand>
        <name>Mg(2+)</name>
        <dbReference type="ChEBI" id="CHEBI:18420"/>
    </ligand>
</feature>
<feature type="binding site" evidence="1">
    <location>
        <begin position="53"/>
        <end position="56"/>
    </location>
    <ligand>
        <name>GTP</name>
        <dbReference type="ChEBI" id="CHEBI:37565"/>
    </ligand>
</feature>
<feature type="binding site" evidence="1">
    <location>
        <begin position="132"/>
        <end position="135"/>
    </location>
    <ligand>
        <name>GTP</name>
        <dbReference type="ChEBI" id="CHEBI:37565"/>
    </ligand>
</feature>
<feature type="binding site" evidence="1">
    <location>
        <begin position="169"/>
        <end position="171"/>
    </location>
    <ligand>
        <name>GTP</name>
        <dbReference type="ChEBI" id="CHEBI:37565"/>
    </ligand>
</feature>
<name>ENGB_METKA</name>
<organism>
    <name type="scientific">Methanopyrus kandleri (strain AV19 / DSM 6324 / JCM 9639 / NBRC 100938)</name>
    <dbReference type="NCBI Taxonomy" id="190192"/>
    <lineage>
        <taxon>Archaea</taxon>
        <taxon>Methanobacteriati</taxon>
        <taxon>Methanobacteriota</taxon>
        <taxon>Methanomada group</taxon>
        <taxon>Methanopyri</taxon>
        <taxon>Methanopyrales</taxon>
        <taxon>Methanopyraceae</taxon>
        <taxon>Methanopyrus</taxon>
    </lineage>
</organism>
<gene>
    <name evidence="1" type="primary">engB</name>
    <name type="ordered locus">MK0207</name>
</gene>
<dbReference type="EMBL" id="AE009439">
    <property type="protein sequence ID" value="AAM01424.1"/>
    <property type="molecule type" value="Genomic_DNA"/>
</dbReference>
<dbReference type="SMR" id="Q8TYT5"/>
<dbReference type="FunCoup" id="Q8TYT5">
    <property type="interactions" value="16"/>
</dbReference>
<dbReference type="STRING" id="190192.MK0207"/>
<dbReference type="PaxDb" id="190192-MK0207"/>
<dbReference type="EnsemblBacteria" id="AAM01424">
    <property type="protein sequence ID" value="AAM01424"/>
    <property type="gene ID" value="MK0207"/>
</dbReference>
<dbReference type="KEGG" id="mka:MK0207"/>
<dbReference type="PATRIC" id="fig|190192.8.peg.208"/>
<dbReference type="HOGENOM" id="CLU_033732_3_0_2"/>
<dbReference type="InParanoid" id="Q8TYT5"/>
<dbReference type="OrthoDB" id="65113at2157"/>
<dbReference type="Proteomes" id="UP000001826">
    <property type="component" value="Chromosome"/>
</dbReference>
<dbReference type="GO" id="GO:0005525">
    <property type="term" value="F:GTP binding"/>
    <property type="evidence" value="ECO:0007669"/>
    <property type="project" value="UniProtKB-UniRule"/>
</dbReference>
<dbReference type="GO" id="GO:0046872">
    <property type="term" value="F:metal ion binding"/>
    <property type="evidence" value="ECO:0007669"/>
    <property type="project" value="UniProtKB-KW"/>
</dbReference>
<dbReference type="GO" id="GO:0051301">
    <property type="term" value="P:cell division"/>
    <property type="evidence" value="ECO:0007669"/>
    <property type="project" value="UniProtKB-KW"/>
</dbReference>
<dbReference type="CDD" id="cd01876">
    <property type="entry name" value="YihA_EngB"/>
    <property type="match status" value="1"/>
</dbReference>
<dbReference type="Gene3D" id="3.40.50.300">
    <property type="entry name" value="P-loop containing nucleotide triphosphate hydrolases"/>
    <property type="match status" value="1"/>
</dbReference>
<dbReference type="HAMAP" id="MF_00321">
    <property type="entry name" value="GTPase_EngB"/>
    <property type="match status" value="1"/>
</dbReference>
<dbReference type="InterPro" id="IPR030393">
    <property type="entry name" value="G_ENGB_dom"/>
</dbReference>
<dbReference type="InterPro" id="IPR006073">
    <property type="entry name" value="GTP-bd"/>
</dbReference>
<dbReference type="InterPro" id="IPR019987">
    <property type="entry name" value="GTP-bd_ribosome_bio_YsxC"/>
</dbReference>
<dbReference type="InterPro" id="IPR027417">
    <property type="entry name" value="P-loop_NTPase"/>
</dbReference>
<dbReference type="NCBIfam" id="NF003255">
    <property type="entry name" value="PRK04213.1"/>
    <property type="match status" value="1"/>
</dbReference>
<dbReference type="PANTHER" id="PTHR11649:SF13">
    <property type="entry name" value="ENGB-TYPE G DOMAIN-CONTAINING PROTEIN"/>
    <property type="match status" value="1"/>
</dbReference>
<dbReference type="PANTHER" id="PTHR11649">
    <property type="entry name" value="MSS1/TRME-RELATED GTP-BINDING PROTEIN"/>
    <property type="match status" value="1"/>
</dbReference>
<dbReference type="Pfam" id="PF01926">
    <property type="entry name" value="MMR_HSR1"/>
    <property type="match status" value="1"/>
</dbReference>
<dbReference type="SUPFAM" id="SSF52540">
    <property type="entry name" value="P-loop containing nucleoside triphosphate hydrolases"/>
    <property type="match status" value="1"/>
</dbReference>
<dbReference type="PROSITE" id="PS51706">
    <property type="entry name" value="G_ENGB"/>
    <property type="match status" value="1"/>
</dbReference>
<evidence type="ECO:0000255" key="1">
    <source>
        <dbReference type="HAMAP-Rule" id="MF_00321"/>
    </source>
</evidence>
<sequence>MPEIVLVGRSNVGKSSLIRAITRGAADVRVGKRPGVTRKPVFHELDGELVLVDMPGFGFMSGVPRRYQERVKDLIVRYLEEKDNILFAIHVVDAKALPEIAERWERRGEIPIDREMFQFLNEVGLDPIVAANKIDKIKPIEFEEHMDAVAEALGLFPPWRQWLDTLFPISAKTGEGLVEFLEALQERVRKAGYPEFARFFRTK</sequence>
<reference key="1">
    <citation type="journal article" date="2002" name="Proc. Natl. Acad. Sci. U.S.A.">
        <title>The complete genome of hyperthermophile Methanopyrus kandleri AV19 and monophyly of archaeal methanogens.</title>
        <authorList>
            <person name="Slesarev A.I."/>
            <person name="Mezhevaya K.V."/>
            <person name="Makarova K.S."/>
            <person name="Polushin N.N."/>
            <person name="Shcherbinina O.V."/>
            <person name="Shakhova V.V."/>
            <person name="Belova G.I."/>
            <person name="Aravind L."/>
            <person name="Natale D.A."/>
            <person name="Rogozin I.B."/>
            <person name="Tatusov R.L."/>
            <person name="Wolf Y.I."/>
            <person name="Stetter K.O."/>
            <person name="Malykh A.G."/>
            <person name="Koonin E.V."/>
            <person name="Kozyavkin S.A."/>
        </authorList>
    </citation>
    <scope>NUCLEOTIDE SEQUENCE [LARGE SCALE GENOMIC DNA]</scope>
    <source>
        <strain>AV19 / DSM 6324 / JCM 9639 / NBRC 100938</strain>
    </source>
</reference>
<protein>
    <recommendedName>
        <fullName evidence="1">Probable GTP-binding protein EngB</fullName>
    </recommendedName>
</protein>
<comment type="function">
    <text evidence="1">Necessary for normal cell division and for the maintenance of normal septation.</text>
</comment>
<comment type="cofactor">
    <cofactor evidence="1">
        <name>Mg(2+)</name>
        <dbReference type="ChEBI" id="CHEBI:18420"/>
    </cofactor>
</comment>
<comment type="similarity">
    <text evidence="1">Belongs to the TRAFAC class TrmE-Era-EngA-EngB-Septin-like GTPase superfamily. EngB GTPase family.</text>
</comment>